<geneLocation type="plasmid">
    <name>pTiA6NC</name>
</geneLocation>
<evidence type="ECO:0000255" key="1"/>
<evidence type="ECO:0000305" key="2"/>
<name>TRAA_RHIRD</name>
<comment type="similarity">
    <text evidence="2">Belongs to the MobA/MobL family.</text>
</comment>
<protein>
    <recommendedName>
        <fullName>Conjugal transfer protein TraA</fullName>
    </recommendedName>
</protein>
<reference key="1">
    <citation type="journal article" date="1996" name="J. Bacteriol.">
        <title>The conjugal transfer system of Agrobacterium tumefaciens octopine-type Ti plasmids is closely related to the transfer system of an IncP plasmid and distantly related to Ti plasmid vir genes.</title>
        <authorList>
            <person name="Alt-Morbe J."/>
            <person name="Stryker J.L."/>
            <person name="Fuqua C."/>
            <person name="Li P.L."/>
            <person name="Farrand S.K."/>
            <person name="Winans S.C."/>
        </authorList>
    </citation>
    <scope>NUCLEOTIDE SEQUENCE [GENOMIC DNA]</scope>
</reference>
<feature type="chain" id="PRO_0000210854" description="Conjugal transfer protein TraA">
    <location>
        <begin position="1"/>
        <end position="1100"/>
    </location>
</feature>
<feature type="binding site" evidence="1">
    <location>
        <begin position="404"/>
        <end position="411"/>
    </location>
    <ligand>
        <name>ATP</name>
        <dbReference type="ChEBI" id="CHEBI:30616"/>
    </ligand>
</feature>
<dbReference type="EMBL" id="AF242881">
    <property type="protein sequence ID" value="AAC28116.1"/>
    <property type="molecule type" value="Genomic_DNA"/>
</dbReference>
<dbReference type="RefSeq" id="NP_059695.1">
    <property type="nucleotide sequence ID" value="NC_002377.1"/>
</dbReference>
<dbReference type="RefSeq" id="WP_010892383.1">
    <property type="nucleotide sequence ID" value="NC_002377.1"/>
</dbReference>
<dbReference type="GO" id="GO:0005524">
    <property type="term" value="F:ATP binding"/>
    <property type="evidence" value="ECO:0007669"/>
    <property type="project" value="UniProtKB-KW"/>
</dbReference>
<dbReference type="GO" id="GO:0003678">
    <property type="term" value="F:DNA helicase activity"/>
    <property type="evidence" value="ECO:0007669"/>
    <property type="project" value="UniProtKB-ARBA"/>
</dbReference>
<dbReference type="CDD" id="cd17933">
    <property type="entry name" value="DEXSc_RecD-like"/>
    <property type="match status" value="1"/>
</dbReference>
<dbReference type="CDD" id="cd18809">
    <property type="entry name" value="SF1_C_RecD"/>
    <property type="match status" value="1"/>
</dbReference>
<dbReference type="Gene3D" id="2.30.30.940">
    <property type="match status" value="1"/>
</dbReference>
<dbReference type="Gene3D" id="3.30.930.30">
    <property type="match status" value="1"/>
</dbReference>
<dbReference type="Gene3D" id="3.40.50.300">
    <property type="entry name" value="P-loop containing nucleotide triphosphate hydrolases"/>
    <property type="match status" value="2"/>
</dbReference>
<dbReference type="InterPro" id="IPR027351">
    <property type="entry name" value="(+)RNA_virus_helicase_core_dom"/>
</dbReference>
<dbReference type="InterPro" id="IPR041533">
    <property type="entry name" value="Bep_BID"/>
</dbReference>
<dbReference type="InterPro" id="IPR050534">
    <property type="entry name" value="Coronavir_polyprotein_1ab"/>
</dbReference>
<dbReference type="InterPro" id="IPR005053">
    <property type="entry name" value="MobA_MobL"/>
</dbReference>
<dbReference type="InterPro" id="IPR027417">
    <property type="entry name" value="P-loop_NTPase"/>
</dbReference>
<dbReference type="InterPro" id="IPR014136">
    <property type="entry name" value="TraA_Ti"/>
</dbReference>
<dbReference type="NCBIfam" id="NF010402">
    <property type="entry name" value="PRK13826.1"/>
    <property type="match status" value="1"/>
</dbReference>
<dbReference type="NCBIfam" id="TIGR02768">
    <property type="entry name" value="TraA_Ti"/>
    <property type="match status" value="1"/>
</dbReference>
<dbReference type="PANTHER" id="PTHR43788:SF6">
    <property type="entry name" value="DNA HELICASE B"/>
    <property type="match status" value="1"/>
</dbReference>
<dbReference type="PANTHER" id="PTHR43788">
    <property type="entry name" value="DNA2/NAM7 HELICASE FAMILY MEMBER"/>
    <property type="match status" value="1"/>
</dbReference>
<dbReference type="Pfam" id="PF13604">
    <property type="entry name" value="AAA_30"/>
    <property type="match status" value="1"/>
</dbReference>
<dbReference type="Pfam" id="PF17841">
    <property type="entry name" value="Bep_C_terminal"/>
    <property type="match status" value="1"/>
</dbReference>
<dbReference type="Pfam" id="PF03389">
    <property type="entry name" value="MobA_MobL"/>
    <property type="match status" value="1"/>
</dbReference>
<dbReference type="Pfam" id="PF01443">
    <property type="entry name" value="Viral_helicase1"/>
    <property type="match status" value="1"/>
</dbReference>
<dbReference type="SUPFAM" id="SSF52540">
    <property type="entry name" value="P-loop containing nucleoside triphosphate hydrolases"/>
    <property type="match status" value="2"/>
</dbReference>
<keyword id="KW-0067">ATP-binding</keyword>
<keyword id="KW-0184">Conjugation</keyword>
<keyword id="KW-0547">Nucleotide-binding</keyword>
<keyword id="KW-0614">Plasmid</keyword>
<organism>
    <name type="scientific">Rhizobium radiobacter</name>
    <name type="common">Agrobacterium tumefaciens</name>
    <name type="synonym">Agrobacterium radiobacter</name>
    <dbReference type="NCBI Taxonomy" id="358"/>
    <lineage>
        <taxon>Bacteria</taxon>
        <taxon>Pseudomonadati</taxon>
        <taxon>Pseudomonadota</taxon>
        <taxon>Alphaproteobacteria</taxon>
        <taxon>Hyphomicrobiales</taxon>
        <taxon>Rhizobiaceae</taxon>
        <taxon>Rhizobium/Agrobacterium group</taxon>
        <taxon>Agrobacterium</taxon>
        <taxon>Agrobacterium tumefaciens complex</taxon>
    </lineage>
</organism>
<proteinExistence type="inferred from homology"/>
<accession>Q44363</accession>
<gene>
    <name type="primary">traA</name>
</gene>
<sequence>MAIAHFSASIVSRGSGRSVVLSAAYRHCAKMEYEREARTIDYTRKQGLLHEEFVLPADAPKWVRSLIADRSVSGASEAFWNKVEAFEKRADAQLARDLTIALPLELSAEQNIALVRDFVENHILAKGMVADWVYHENPGNPHIHLMTTLRPLSDESFGSKKVAVIGEDGQPVRTKSGKILYELWAGSTDDFNVLRDGWFERLNHHLALGGIDLKIDGRSYEKQGINLEPTIHLGVGAKAIERKAEQRGVRPELERVELNEQRRSENTRRILNNPAIVLDLITREKSVFDERDVAKVLHRYIDDPALFQQLMIKIILNRQVLRLQRETIDFSTGEKLPARYSTRAMIRLEATMARQATWLSNREGRGVSPTALDATFRRHERLSDEQKAAIEHVAGPARIAAVVGRAGAGKTTMMKAAREAWELAGYHVVGGALAGKAAEGLEKEAGIQSRTLASWELRWKRGRDLLDDKTIFIMDEAGMVASKQMAGFVDTAVRAGAKIVLVGDPEQLQPIEAGAAFRAIADRIGYAELETIYRQREEWMRKASLDLARGNVENALSAYRANVRITGERLKAEAVERLIADWNHDYDQTKTILILAHLRRDVRMLNVMAREKLVERGMVGEGHLFRTADGERRFDAGDQIVFLKNEGSLGLKNGMIGHVVVAAANRIVATVGEGDQRRQVIVEQRFYNNLDHGYATTIHKSQGATVDRVKVLASLSLDRHLTYVAMTRHREDLQLYYGTRSFSFNGGLAKVLSRRQAKETTLDYEHGQFYREALRFAETRGLHVVQVARTMVRDRLDWTLRQKAKLVDLSRRLAAFAAHLGITQSPKTQTMKETAPMVAGIKTFSGSVSDIVGDRLGTDPSLKRQWEEVSARFAYVFADPETAFRAMNFAALLADKEVAKQILQKLEAEPGSIGPLKGKTGILASKPEREARRVAEVNVPALKRDLEQYLRMRETVTQRLQTDEQSLRQRVSIDIPALSPAARVVRERVRDAIDRNDLPAAIAYALSNRETKLEIDGFNQAVTERFGERTLLSNAAREPSGKLYEKLSEGMKPEQKEELKQAWPVMRTAQQLVAHERTVHSLKLAEEHRLTQRQTPVLKQ</sequence>